<organism>
    <name type="scientific">Escherichia coli O1:K1 / APEC</name>
    <dbReference type="NCBI Taxonomy" id="405955"/>
    <lineage>
        <taxon>Bacteria</taxon>
        <taxon>Pseudomonadati</taxon>
        <taxon>Pseudomonadota</taxon>
        <taxon>Gammaproteobacteria</taxon>
        <taxon>Enterobacterales</taxon>
        <taxon>Enterobacteriaceae</taxon>
        <taxon>Escherichia</taxon>
    </lineage>
</organism>
<sequence length="427" mass="49450">MTWFIDRRLNGKNKSMVNRQRFLRRYKAQIKQSISEAINKRSVTDVDSGESVSIPTEDISEPMFHQGRGGLRHRVHPGNDHFVQNDRIERPQGGGGGSGSGQGQASQDGEGQDEFVFQISKDEYLDLLFEDLALPNLKQNQQRQLTEYKTHRAGYTANGVPANISVVRSLQNSLARRTAMTAGKRRELHALEENLAIISNSEPAQLLEEERLRKEIAELRAKIERVPFIDTFDLRYKNYEKRPDPSSQAVMFCLMDVSGSMDQSTKDMAKRFYILLYLFLSRTYKNVEVVYIRHHTQAKEVDEHEFFYSQETGGTIVSSALKLMDEVVKERYNPAQWNIYAAQASDGDNWADDSPLCHEILAKKILPVVRYYSYIEITRRAHQTLWREYEHLQSTFDNFAMQHIRDQDDIYPVFRELFHKQNATAKD</sequence>
<protein>
    <recommendedName>
        <fullName evidence="1">UPF0229 protein YeaH</fullName>
    </recommendedName>
</protein>
<reference key="1">
    <citation type="journal article" date="2007" name="J. Bacteriol.">
        <title>The genome sequence of avian pathogenic Escherichia coli strain O1:K1:H7 shares strong similarities with human extraintestinal pathogenic E. coli genomes.</title>
        <authorList>
            <person name="Johnson T.J."/>
            <person name="Kariyawasam S."/>
            <person name="Wannemuehler Y."/>
            <person name="Mangiamele P."/>
            <person name="Johnson S.J."/>
            <person name="Doetkott C."/>
            <person name="Skyberg J.A."/>
            <person name="Lynne A.M."/>
            <person name="Johnson J.R."/>
            <person name="Nolan L.K."/>
        </authorList>
    </citation>
    <scope>NUCLEOTIDE SEQUENCE [LARGE SCALE GENOMIC DNA]</scope>
</reference>
<dbReference type="EMBL" id="CP000468">
    <property type="protein sequence ID" value="ABJ01153.1"/>
    <property type="molecule type" value="Genomic_DNA"/>
</dbReference>
<dbReference type="RefSeq" id="WP_000219684.1">
    <property type="nucleotide sequence ID" value="NZ_CADILS010000002.1"/>
</dbReference>
<dbReference type="SMR" id="A1ABW3"/>
<dbReference type="KEGG" id="ecv:APECO1_852"/>
<dbReference type="HOGENOM" id="CLU_049702_0_0_6"/>
<dbReference type="Proteomes" id="UP000008216">
    <property type="component" value="Chromosome"/>
</dbReference>
<dbReference type="HAMAP" id="MF_01232">
    <property type="entry name" value="UPF0229"/>
    <property type="match status" value="1"/>
</dbReference>
<dbReference type="InterPro" id="IPR006698">
    <property type="entry name" value="UPF0229"/>
</dbReference>
<dbReference type="NCBIfam" id="NF003707">
    <property type="entry name" value="PRK05325.1-2"/>
    <property type="match status" value="1"/>
</dbReference>
<dbReference type="NCBIfam" id="NF003708">
    <property type="entry name" value="PRK05325.1-3"/>
    <property type="match status" value="1"/>
</dbReference>
<dbReference type="PANTHER" id="PTHR30510">
    <property type="entry name" value="UPF0229 PROTEIN YEAH"/>
    <property type="match status" value="1"/>
</dbReference>
<dbReference type="PANTHER" id="PTHR30510:SF2">
    <property type="entry name" value="UPF0229 PROTEIN YEAH"/>
    <property type="match status" value="1"/>
</dbReference>
<dbReference type="Pfam" id="PF04285">
    <property type="entry name" value="DUF444"/>
    <property type="match status" value="1"/>
</dbReference>
<keyword id="KW-1185">Reference proteome</keyword>
<accession>A1ABW3</accession>
<gene>
    <name evidence="1" type="primary">yeaH</name>
    <name type="ordered locus">Ecok1_16590</name>
    <name type="ORF">APECO1_852</name>
</gene>
<name>YEAH_ECOK1</name>
<evidence type="ECO:0000255" key="1">
    <source>
        <dbReference type="HAMAP-Rule" id="MF_01232"/>
    </source>
</evidence>
<evidence type="ECO:0000256" key="2">
    <source>
        <dbReference type="SAM" id="MobiDB-lite"/>
    </source>
</evidence>
<proteinExistence type="inferred from homology"/>
<comment type="similarity">
    <text evidence="1">Belongs to the UPF0229 family.</text>
</comment>
<feature type="chain" id="PRO_1000066856" description="UPF0229 protein YeaH">
    <location>
        <begin position="1"/>
        <end position="427"/>
    </location>
</feature>
<feature type="region of interest" description="Disordered" evidence="2">
    <location>
        <begin position="79"/>
        <end position="110"/>
    </location>
</feature>
<feature type="compositionally biased region" description="Basic and acidic residues" evidence="2">
    <location>
        <begin position="79"/>
        <end position="90"/>
    </location>
</feature>
<feature type="compositionally biased region" description="Gly residues" evidence="2">
    <location>
        <begin position="92"/>
        <end position="102"/>
    </location>
</feature>